<accession>O67564</accession>
<organism>
    <name type="scientific">Aquifex aeolicus (strain VF5)</name>
    <dbReference type="NCBI Taxonomy" id="224324"/>
    <lineage>
        <taxon>Bacteria</taxon>
        <taxon>Pseudomonadati</taxon>
        <taxon>Aquificota</taxon>
        <taxon>Aquificia</taxon>
        <taxon>Aquificales</taxon>
        <taxon>Aquificaceae</taxon>
        <taxon>Aquifex</taxon>
    </lineage>
</organism>
<protein>
    <recommendedName>
        <fullName evidence="1">Large ribosomal subunit protein uL18</fullName>
    </recommendedName>
    <alternativeName>
        <fullName evidence="2">50S ribosomal protein L18</fullName>
    </alternativeName>
</protein>
<dbReference type="EMBL" id="AE000657">
    <property type="protein sequence ID" value="AAC07533.1"/>
    <property type="molecule type" value="Genomic_DNA"/>
</dbReference>
<dbReference type="PIR" id="C70442">
    <property type="entry name" value="C70442"/>
</dbReference>
<dbReference type="RefSeq" id="NP_214130.1">
    <property type="nucleotide sequence ID" value="NC_000918.1"/>
</dbReference>
<dbReference type="RefSeq" id="WP_010881067.1">
    <property type="nucleotide sequence ID" value="NC_000918.1"/>
</dbReference>
<dbReference type="SMR" id="O67564"/>
<dbReference type="FunCoup" id="O67564">
    <property type="interactions" value="522"/>
</dbReference>
<dbReference type="STRING" id="224324.aq_1648"/>
<dbReference type="EnsemblBacteria" id="AAC07533">
    <property type="protein sequence ID" value="AAC07533"/>
    <property type="gene ID" value="aq_1648"/>
</dbReference>
<dbReference type="KEGG" id="aae:aq_1648"/>
<dbReference type="PATRIC" id="fig|224324.8.peg.1270"/>
<dbReference type="eggNOG" id="COG0256">
    <property type="taxonomic scope" value="Bacteria"/>
</dbReference>
<dbReference type="HOGENOM" id="CLU_098841_0_1_0"/>
<dbReference type="InParanoid" id="O67564"/>
<dbReference type="OrthoDB" id="9810939at2"/>
<dbReference type="Proteomes" id="UP000000798">
    <property type="component" value="Chromosome"/>
</dbReference>
<dbReference type="GO" id="GO:0022625">
    <property type="term" value="C:cytosolic large ribosomal subunit"/>
    <property type="evidence" value="ECO:0000318"/>
    <property type="project" value="GO_Central"/>
</dbReference>
<dbReference type="GO" id="GO:0008097">
    <property type="term" value="F:5S rRNA binding"/>
    <property type="evidence" value="ECO:0000318"/>
    <property type="project" value="GO_Central"/>
</dbReference>
<dbReference type="GO" id="GO:0003735">
    <property type="term" value="F:structural constituent of ribosome"/>
    <property type="evidence" value="ECO:0007669"/>
    <property type="project" value="InterPro"/>
</dbReference>
<dbReference type="GO" id="GO:0006412">
    <property type="term" value="P:translation"/>
    <property type="evidence" value="ECO:0007669"/>
    <property type="project" value="UniProtKB-UniRule"/>
</dbReference>
<dbReference type="CDD" id="cd00432">
    <property type="entry name" value="Ribosomal_L18_L5e"/>
    <property type="match status" value="1"/>
</dbReference>
<dbReference type="FunFam" id="3.30.420.100:FF:000001">
    <property type="entry name" value="50S ribosomal protein L18"/>
    <property type="match status" value="1"/>
</dbReference>
<dbReference type="Gene3D" id="3.30.420.100">
    <property type="match status" value="1"/>
</dbReference>
<dbReference type="HAMAP" id="MF_01337_B">
    <property type="entry name" value="Ribosomal_uL18_B"/>
    <property type="match status" value="1"/>
</dbReference>
<dbReference type="InterPro" id="IPR004389">
    <property type="entry name" value="Ribosomal_uL18_bac-type"/>
</dbReference>
<dbReference type="InterPro" id="IPR005484">
    <property type="entry name" value="Ribosomal_uL18_bac/euk"/>
</dbReference>
<dbReference type="NCBIfam" id="TIGR00060">
    <property type="entry name" value="L18_bact"/>
    <property type="match status" value="1"/>
</dbReference>
<dbReference type="PANTHER" id="PTHR12899">
    <property type="entry name" value="39S RIBOSOMAL PROTEIN L18, MITOCHONDRIAL"/>
    <property type="match status" value="1"/>
</dbReference>
<dbReference type="PANTHER" id="PTHR12899:SF3">
    <property type="entry name" value="LARGE RIBOSOMAL SUBUNIT PROTEIN UL18M"/>
    <property type="match status" value="1"/>
</dbReference>
<dbReference type="Pfam" id="PF00861">
    <property type="entry name" value="Ribosomal_L18p"/>
    <property type="match status" value="1"/>
</dbReference>
<dbReference type="SUPFAM" id="SSF53137">
    <property type="entry name" value="Translational machinery components"/>
    <property type="match status" value="1"/>
</dbReference>
<proteinExistence type="inferred from homology"/>
<comment type="function">
    <text evidence="1">This is one of the proteins that bind and probably mediate the attachment of the 5S RNA into the large ribosomal subunit, where it forms part of the central protuberance.</text>
</comment>
<comment type="subunit">
    <text evidence="1">Part of the 50S ribosomal subunit; part of the 5S rRNA/L5/L18/L25 subcomplex. Contacts the 5S and 23S rRNAs.</text>
</comment>
<comment type="similarity">
    <text evidence="1">Belongs to the universal ribosomal protein uL18 family.</text>
</comment>
<feature type="chain" id="PRO_0000131201" description="Large ribosomal subunit protein uL18">
    <location>
        <begin position="1"/>
        <end position="124"/>
    </location>
</feature>
<reference key="1">
    <citation type="journal article" date="1998" name="Nature">
        <title>The complete genome of the hyperthermophilic bacterium Aquifex aeolicus.</title>
        <authorList>
            <person name="Deckert G."/>
            <person name="Warren P.V."/>
            <person name="Gaasterland T."/>
            <person name="Young W.G."/>
            <person name="Lenox A.L."/>
            <person name="Graham D.E."/>
            <person name="Overbeek R."/>
            <person name="Snead M.A."/>
            <person name="Keller M."/>
            <person name="Aujay M."/>
            <person name="Huber R."/>
            <person name="Feldman R.A."/>
            <person name="Short J.M."/>
            <person name="Olsen G.J."/>
            <person name="Swanson R.V."/>
        </authorList>
    </citation>
    <scope>NUCLEOTIDE SEQUENCE [LARGE SCALE GENOMIC DNA]</scope>
    <source>
        <strain>VF5</strain>
    </source>
</reference>
<keyword id="KW-1185">Reference proteome</keyword>
<keyword id="KW-0687">Ribonucleoprotein</keyword>
<keyword id="KW-0689">Ribosomal protein</keyword>
<keyword id="KW-0694">RNA-binding</keyword>
<keyword id="KW-0699">rRNA-binding</keyword>
<evidence type="ECO:0000255" key="1">
    <source>
        <dbReference type="HAMAP-Rule" id="MF_01337"/>
    </source>
</evidence>
<evidence type="ECO:0000305" key="2"/>
<gene>
    <name evidence="1" type="primary">rplR</name>
    <name type="ordered locus">aq_1648</name>
</gene>
<name>RL18_AQUAE</name>
<sequence length="124" mass="14427">MPRLKTRREKRLRRHKRIRKKVFGTPERPRLCVYRSLKHFYAQIIDDTIGHTLVSASTLDPEFEKITGKRGGKSIKDAEVVAEIIARRALEKGIKKVVFDRGGFKYHGKIKAFADKCREMGLEF</sequence>